<protein>
    <recommendedName>
        <fullName evidence="1">Ribosomal protein L11 methyltransferase</fullName>
        <shortName evidence="1">L11 Mtase</shortName>
        <ecNumber evidence="1">2.1.1.-</ecNumber>
    </recommendedName>
</protein>
<dbReference type="EC" id="2.1.1.-" evidence="1"/>
<dbReference type="EMBL" id="BX571856">
    <property type="protein sequence ID" value="CAG40650.1"/>
    <property type="molecule type" value="Genomic_DNA"/>
</dbReference>
<dbReference type="RefSeq" id="WP_001104621.1">
    <property type="nucleotide sequence ID" value="NC_002952.2"/>
</dbReference>
<dbReference type="SMR" id="Q6GGC2"/>
<dbReference type="KEGG" id="sar:SAR1655"/>
<dbReference type="HOGENOM" id="CLU_049382_0_1_9"/>
<dbReference type="Proteomes" id="UP000000596">
    <property type="component" value="Chromosome"/>
</dbReference>
<dbReference type="GO" id="GO:0005737">
    <property type="term" value="C:cytoplasm"/>
    <property type="evidence" value="ECO:0007669"/>
    <property type="project" value="UniProtKB-SubCell"/>
</dbReference>
<dbReference type="GO" id="GO:0016279">
    <property type="term" value="F:protein-lysine N-methyltransferase activity"/>
    <property type="evidence" value="ECO:0007669"/>
    <property type="project" value="RHEA"/>
</dbReference>
<dbReference type="GO" id="GO:0032259">
    <property type="term" value="P:methylation"/>
    <property type="evidence" value="ECO:0007669"/>
    <property type="project" value="UniProtKB-KW"/>
</dbReference>
<dbReference type="CDD" id="cd02440">
    <property type="entry name" value="AdoMet_MTases"/>
    <property type="match status" value="1"/>
</dbReference>
<dbReference type="Gene3D" id="3.40.50.150">
    <property type="entry name" value="Vaccinia Virus protein VP39"/>
    <property type="match status" value="1"/>
</dbReference>
<dbReference type="HAMAP" id="MF_00735">
    <property type="entry name" value="Methyltr_PrmA"/>
    <property type="match status" value="1"/>
</dbReference>
<dbReference type="InterPro" id="IPR050078">
    <property type="entry name" value="Ribosomal_L11_MeTrfase_PrmA"/>
</dbReference>
<dbReference type="InterPro" id="IPR004498">
    <property type="entry name" value="Ribosomal_PrmA_MeTrfase"/>
</dbReference>
<dbReference type="InterPro" id="IPR029063">
    <property type="entry name" value="SAM-dependent_MTases_sf"/>
</dbReference>
<dbReference type="NCBIfam" id="TIGR00406">
    <property type="entry name" value="prmA"/>
    <property type="match status" value="1"/>
</dbReference>
<dbReference type="PANTHER" id="PTHR43648">
    <property type="entry name" value="ELECTRON TRANSFER FLAVOPROTEIN BETA SUBUNIT LYSINE METHYLTRANSFERASE"/>
    <property type="match status" value="1"/>
</dbReference>
<dbReference type="PANTHER" id="PTHR43648:SF1">
    <property type="entry name" value="ELECTRON TRANSFER FLAVOPROTEIN BETA SUBUNIT LYSINE METHYLTRANSFERASE"/>
    <property type="match status" value="1"/>
</dbReference>
<dbReference type="Pfam" id="PF06325">
    <property type="entry name" value="PrmA"/>
    <property type="match status" value="1"/>
</dbReference>
<dbReference type="PIRSF" id="PIRSF000401">
    <property type="entry name" value="RPL11_MTase"/>
    <property type="match status" value="1"/>
</dbReference>
<dbReference type="SUPFAM" id="SSF53335">
    <property type="entry name" value="S-adenosyl-L-methionine-dependent methyltransferases"/>
    <property type="match status" value="1"/>
</dbReference>
<keyword id="KW-0963">Cytoplasm</keyword>
<keyword id="KW-0489">Methyltransferase</keyword>
<keyword id="KW-0949">S-adenosyl-L-methionine</keyword>
<keyword id="KW-0808">Transferase</keyword>
<comment type="function">
    <text evidence="1">Methylates ribosomal protein L11.</text>
</comment>
<comment type="catalytic activity">
    <reaction evidence="1">
        <text>L-lysyl-[protein] + 3 S-adenosyl-L-methionine = N(6),N(6),N(6)-trimethyl-L-lysyl-[protein] + 3 S-adenosyl-L-homocysteine + 3 H(+)</text>
        <dbReference type="Rhea" id="RHEA:54192"/>
        <dbReference type="Rhea" id="RHEA-COMP:9752"/>
        <dbReference type="Rhea" id="RHEA-COMP:13826"/>
        <dbReference type="ChEBI" id="CHEBI:15378"/>
        <dbReference type="ChEBI" id="CHEBI:29969"/>
        <dbReference type="ChEBI" id="CHEBI:57856"/>
        <dbReference type="ChEBI" id="CHEBI:59789"/>
        <dbReference type="ChEBI" id="CHEBI:61961"/>
    </reaction>
</comment>
<comment type="subcellular location">
    <subcellularLocation>
        <location evidence="1">Cytoplasm</location>
    </subcellularLocation>
</comment>
<comment type="similarity">
    <text evidence="1">Belongs to the methyltransferase superfamily. PrmA family.</text>
</comment>
<proteinExistence type="inferred from homology"/>
<gene>
    <name evidence="1" type="primary">prmA</name>
    <name type="ordered locus">SAR1655</name>
</gene>
<organism>
    <name type="scientific">Staphylococcus aureus (strain MRSA252)</name>
    <dbReference type="NCBI Taxonomy" id="282458"/>
    <lineage>
        <taxon>Bacteria</taxon>
        <taxon>Bacillati</taxon>
        <taxon>Bacillota</taxon>
        <taxon>Bacilli</taxon>
        <taxon>Bacillales</taxon>
        <taxon>Staphylococcaceae</taxon>
        <taxon>Staphylococcus</taxon>
    </lineage>
</organism>
<reference key="1">
    <citation type="journal article" date="2004" name="Proc. Natl. Acad. Sci. U.S.A.">
        <title>Complete genomes of two clinical Staphylococcus aureus strains: evidence for the rapid evolution of virulence and drug resistance.</title>
        <authorList>
            <person name="Holden M.T.G."/>
            <person name="Feil E.J."/>
            <person name="Lindsay J.A."/>
            <person name="Peacock S.J."/>
            <person name="Day N.P.J."/>
            <person name="Enright M.C."/>
            <person name="Foster T.J."/>
            <person name="Moore C.E."/>
            <person name="Hurst L."/>
            <person name="Atkin R."/>
            <person name="Barron A."/>
            <person name="Bason N."/>
            <person name="Bentley S.D."/>
            <person name="Chillingworth C."/>
            <person name="Chillingworth T."/>
            <person name="Churcher C."/>
            <person name="Clark L."/>
            <person name="Corton C."/>
            <person name="Cronin A."/>
            <person name="Doggett J."/>
            <person name="Dowd L."/>
            <person name="Feltwell T."/>
            <person name="Hance Z."/>
            <person name="Harris B."/>
            <person name="Hauser H."/>
            <person name="Holroyd S."/>
            <person name="Jagels K."/>
            <person name="James K.D."/>
            <person name="Lennard N."/>
            <person name="Line A."/>
            <person name="Mayes R."/>
            <person name="Moule S."/>
            <person name="Mungall K."/>
            <person name="Ormond D."/>
            <person name="Quail M.A."/>
            <person name="Rabbinowitsch E."/>
            <person name="Rutherford K.M."/>
            <person name="Sanders M."/>
            <person name="Sharp S."/>
            <person name="Simmonds M."/>
            <person name="Stevens K."/>
            <person name="Whitehead S."/>
            <person name="Barrell B.G."/>
            <person name="Spratt B.G."/>
            <person name="Parkhill J."/>
        </authorList>
    </citation>
    <scope>NUCLEOTIDE SEQUENCE [LARGE SCALE GENOMIC DNA]</scope>
    <source>
        <strain>MRSA252</strain>
    </source>
</reference>
<feature type="chain" id="PRO_0000192305" description="Ribosomal protein L11 methyltransferase">
    <location>
        <begin position="1"/>
        <end position="312"/>
    </location>
</feature>
<feature type="binding site" evidence="1">
    <location>
        <position position="160"/>
    </location>
    <ligand>
        <name>S-adenosyl-L-methionine</name>
        <dbReference type="ChEBI" id="CHEBI:59789"/>
    </ligand>
</feature>
<feature type="binding site" evidence="1">
    <location>
        <position position="181"/>
    </location>
    <ligand>
        <name>S-adenosyl-L-methionine</name>
        <dbReference type="ChEBI" id="CHEBI:59789"/>
    </ligand>
</feature>
<feature type="binding site" evidence="1">
    <location>
        <position position="203"/>
    </location>
    <ligand>
        <name>S-adenosyl-L-methionine</name>
        <dbReference type="ChEBI" id="CHEBI:59789"/>
    </ligand>
</feature>
<feature type="binding site" evidence="1">
    <location>
        <position position="246"/>
    </location>
    <ligand>
        <name>S-adenosyl-L-methionine</name>
        <dbReference type="ChEBI" id="CHEBI:59789"/>
    </ligand>
</feature>
<name>PRMA_STAAR</name>
<sequence>MNWTELSIIINHEAVELATNILENHGSNGVVIEDSYDLINQPEDKYGEIYALKKEDYPDKGVRLKAYFNELTYDDKLRQRIKDELLNLDELDQHNVQFSEQIIAETDWENEWKNYFHPFRASKKFTIVPSWETYAKEADEELCIELDPGMAFGTGDHPTTSMCLKAIETYVLPQHSVIDVGTGSGILSIASYLIGVKRIKALDIDEMAVSVAKENFRRNHCETLIEAVPGNLLKDETEKFDIVIANILAHIIDEMIDDAYNTLNEGGYFITSGIIKEKYEGIQSHMERVGFKIISEQHDNGWVCLVGQKVSE</sequence>
<accession>Q6GGC2</accession>
<evidence type="ECO:0000255" key="1">
    <source>
        <dbReference type="HAMAP-Rule" id="MF_00735"/>
    </source>
</evidence>